<feature type="chain" id="PRO_1000201023" description="Glutamate-1-semialdehyde 2,1-aminomutase">
    <location>
        <begin position="1"/>
        <end position="429"/>
    </location>
</feature>
<feature type="modified residue" description="N6-(pyridoxal phosphate)lysine" evidence="1">
    <location>
        <position position="267"/>
    </location>
</feature>
<evidence type="ECO:0000255" key="1">
    <source>
        <dbReference type="HAMAP-Rule" id="MF_00375"/>
    </source>
</evidence>
<dbReference type="EC" id="5.4.3.8" evidence="1"/>
<dbReference type="EMBL" id="CP000875">
    <property type="protein sequence ID" value="ABX06187.1"/>
    <property type="molecule type" value="Genomic_DNA"/>
</dbReference>
<dbReference type="SMR" id="A9B550"/>
<dbReference type="FunCoup" id="A9B550">
    <property type="interactions" value="457"/>
</dbReference>
<dbReference type="STRING" id="316274.Haur_3551"/>
<dbReference type="KEGG" id="hau:Haur_3551"/>
<dbReference type="eggNOG" id="COG0001">
    <property type="taxonomic scope" value="Bacteria"/>
</dbReference>
<dbReference type="HOGENOM" id="CLU_016922_1_5_0"/>
<dbReference type="InParanoid" id="A9B550"/>
<dbReference type="UniPathway" id="UPA00251">
    <property type="reaction ID" value="UER00317"/>
</dbReference>
<dbReference type="Proteomes" id="UP000000787">
    <property type="component" value="Chromosome"/>
</dbReference>
<dbReference type="GO" id="GO:0005737">
    <property type="term" value="C:cytoplasm"/>
    <property type="evidence" value="ECO:0007669"/>
    <property type="project" value="UniProtKB-SubCell"/>
</dbReference>
<dbReference type="GO" id="GO:0042286">
    <property type="term" value="F:glutamate-1-semialdehyde 2,1-aminomutase activity"/>
    <property type="evidence" value="ECO:0007669"/>
    <property type="project" value="UniProtKB-UniRule"/>
</dbReference>
<dbReference type="GO" id="GO:0030170">
    <property type="term" value="F:pyridoxal phosphate binding"/>
    <property type="evidence" value="ECO:0007669"/>
    <property type="project" value="InterPro"/>
</dbReference>
<dbReference type="GO" id="GO:0008483">
    <property type="term" value="F:transaminase activity"/>
    <property type="evidence" value="ECO:0007669"/>
    <property type="project" value="InterPro"/>
</dbReference>
<dbReference type="GO" id="GO:0006782">
    <property type="term" value="P:protoporphyrinogen IX biosynthetic process"/>
    <property type="evidence" value="ECO:0007669"/>
    <property type="project" value="UniProtKB-UniRule"/>
</dbReference>
<dbReference type="CDD" id="cd00610">
    <property type="entry name" value="OAT_like"/>
    <property type="match status" value="1"/>
</dbReference>
<dbReference type="FunFam" id="3.40.640.10:FF:000021">
    <property type="entry name" value="Glutamate-1-semialdehyde 2,1-aminomutase"/>
    <property type="match status" value="1"/>
</dbReference>
<dbReference type="Gene3D" id="3.90.1150.10">
    <property type="entry name" value="Aspartate Aminotransferase, domain 1"/>
    <property type="match status" value="1"/>
</dbReference>
<dbReference type="Gene3D" id="3.40.640.10">
    <property type="entry name" value="Type I PLP-dependent aspartate aminotransferase-like (Major domain)"/>
    <property type="match status" value="1"/>
</dbReference>
<dbReference type="HAMAP" id="MF_00375">
    <property type="entry name" value="HemL_aminotrans_3"/>
    <property type="match status" value="1"/>
</dbReference>
<dbReference type="InterPro" id="IPR004639">
    <property type="entry name" value="4pyrrol_synth_GluAld_NH2Trfase"/>
</dbReference>
<dbReference type="InterPro" id="IPR005814">
    <property type="entry name" value="Aminotrans_3"/>
</dbReference>
<dbReference type="InterPro" id="IPR049704">
    <property type="entry name" value="Aminotrans_3_PPA_site"/>
</dbReference>
<dbReference type="InterPro" id="IPR015424">
    <property type="entry name" value="PyrdxlP-dep_Trfase"/>
</dbReference>
<dbReference type="InterPro" id="IPR015421">
    <property type="entry name" value="PyrdxlP-dep_Trfase_major"/>
</dbReference>
<dbReference type="InterPro" id="IPR015422">
    <property type="entry name" value="PyrdxlP-dep_Trfase_small"/>
</dbReference>
<dbReference type="NCBIfam" id="TIGR00713">
    <property type="entry name" value="hemL"/>
    <property type="match status" value="1"/>
</dbReference>
<dbReference type="NCBIfam" id="NF000818">
    <property type="entry name" value="PRK00062.1"/>
    <property type="match status" value="1"/>
</dbReference>
<dbReference type="PANTHER" id="PTHR43713">
    <property type="entry name" value="GLUTAMATE-1-SEMIALDEHYDE 2,1-AMINOMUTASE"/>
    <property type="match status" value="1"/>
</dbReference>
<dbReference type="PANTHER" id="PTHR43713:SF3">
    <property type="entry name" value="GLUTAMATE-1-SEMIALDEHYDE 2,1-AMINOMUTASE 1, CHLOROPLASTIC-RELATED"/>
    <property type="match status" value="1"/>
</dbReference>
<dbReference type="Pfam" id="PF00202">
    <property type="entry name" value="Aminotran_3"/>
    <property type="match status" value="1"/>
</dbReference>
<dbReference type="SUPFAM" id="SSF53383">
    <property type="entry name" value="PLP-dependent transferases"/>
    <property type="match status" value="1"/>
</dbReference>
<dbReference type="PROSITE" id="PS00600">
    <property type="entry name" value="AA_TRANSFER_CLASS_3"/>
    <property type="match status" value="1"/>
</dbReference>
<keyword id="KW-0963">Cytoplasm</keyword>
<keyword id="KW-0413">Isomerase</keyword>
<keyword id="KW-0627">Porphyrin biosynthesis</keyword>
<keyword id="KW-0663">Pyridoxal phosphate</keyword>
<protein>
    <recommendedName>
        <fullName evidence="1">Glutamate-1-semialdehyde 2,1-aminomutase</fullName>
        <shortName evidence="1">GSA</shortName>
        <ecNumber evidence="1">5.4.3.8</ecNumber>
    </recommendedName>
    <alternativeName>
        <fullName evidence="1">Glutamate-1-semialdehyde aminotransferase</fullName>
        <shortName evidence="1">GSA-AT</shortName>
    </alternativeName>
</protein>
<gene>
    <name evidence="1" type="primary">hemL</name>
    <name type="ordered locus">Haur_3551</name>
</gene>
<reference key="1">
    <citation type="journal article" date="2011" name="Stand. Genomic Sci.">
        <title>Complete genome sequence of the filamentous gliding predatory bacterium Herpetosiphon aurantiacus type strain (114-95(T)).</title>
        <authorList>
            <person name="Kiss H."/>
            <person name="Nett M."/>
            <person name="Domin N."/>
            <person name="Martin K."/>
            <person name="Maresca J.A."/>
            <person name="Copeland A."/>
            <person name="Lapidus A."/>
            <person name="Lucas S."/>
            <person name="Berry K.W."/>
            <person name="Glavina Del Rio T."/>
            <person name="Dalin E."/>
            <person name="Tice H."/>
            <person name="Pitluck S."/>
            <person name="Richardson P."/>
            <person name="Bruce D."/>
            <person name="Goodwin L."/>
            <person name="Han C."/>
            <person name="Detter J.C."/>
            <person name="Schmutz J."/>
            <person name="Brettin T."/>
            <person name="Land M."/>
            <person name="Hauser L."/>
            <person name="Kyrpides N.C."/>
            <person name="Ivanova N."/>
            <person name="Goeker M."/>
            <person name="Woyke T."/>
            <person name="Klenk H.P."/>
            <person name="Bryant D.A."/>
        </authorList>
    </citation>
    <scope>NUCLEOTIDE SEQUENCE [LARGE SCALE GENOMIC DNA]</scope>
    <source>
        <strain>ATCC 23779 / DSM 785 / 114-95</strain>
    </source>
</reference>
<sequence>MINDASSAAFERAQALLPGGVNSPVRAFRGVGGVPRFIDHGAGAYLYDIDGNQYIDYVLSWGPLILGHAYPAVVEAICAQAQRGTSFGAPTELESELAELVIAAVPSVEMVRFVSSGTEAAMSAIRLARAYTQREKIIKFEGCYHGHADPFLVQAGSGVATLGLPDSPGVLKSATSNTLTAPFNDLEAVEALFKANAGQVAALVIEPVAGNMGFVLPREGYLAGLRQLCDQYGALLIFDEVMTGFRVAYGGAQAYFNVMPDLTCLGKVVGGGLPAAAYGGRREIMQMVAPAGTMYQAGTLSGNPLAMVAGIVTLREIAKPEVFERLTGVTSTLCQGFWKAAFKNGIPFQAHKAGSMWGFFFAGDEVYDFTSAKRADTAMFGKFFHAMLEQGVYLAPSQFEAAFVSTAHTDELVAQTINAAQAAFASIRS</sequence>
<comment type="catalytic activity">
    <reaction evidence="1">
        <text>(S)-4-amino-5-oxopentanoate = 5-aminolevulinate</text>
        <dbReference type="Rhea" id="RHEA:14265"/>
        <dbReference type="ChEBI" id="CHEBI:57501"/>
        <dbReference type="ChEBI" id="CHEBI:356416"/>
        <dbReference type="EC" id="5.4.3.8"/>
    </reaction>
</comment>
<comment type="cofactor">
    <cofactor evidence="1">
        <name>pyridoxal 5'-phosphate</name>
        <dbReference type="ChEBI" id="CHEBI:597326"/>
    </cofactor>
</comment>
<comment type="pathway">
    <text evidence="1">Porphyrin-containing compound metabolism; protoporphyrin-IX biosynthesis; 5-aminolevulinate from L-glutamyl-tRNA(Glu): step 2/2.</text>
</comment>
<comment type="subunit">
    <text evidence="1">Homodimer.</text>
</comment>
<comment type="subcellular location">
    <subcellularLocation>
        <location evidence="1">Cytoplasm</location>
    </subcellularLocation>
</comment>
<comment type="similarity">
    <text evidence="1">Belongs to the class-III pyridoxal-phosphate-dependent aminotransferase family. HemL subfamily.</text>
</comment>
<name>GSA_HERA2</name>
<organism>
    <name type="scientific">Herpetosiphon aurantiacus (strain ATCC 23779 / DSM 785 / 114-95)</name>
    <dbReference type="NCBI Taxonomy" id="316274"/>
    <lineage>
        <taxon>Bacteria</taxon>
        <taxon>Bacillati</taxon>
        <taxon>Chloroflexota</taxon>
        <taxon>Chloroflexia</taxon>
        <taxon>Herpetosiphonales</taxon>
        <taxon>Herpetosiphonaceae</taxon>
        <taxon>Herpetosiphon</taxon>
    </lineage>
</organism>
<accession>A9B550</accession>
<proteinExistence type="inferred from homology"/>